<accession>Q82AM7</accession>
<keyword id="KW-0169">Cobalamin biosynthesis</keyword>
<keyword id="KW-0328">Glycosyltransferase</keyword>
<keyword id="KW-1185">Reference proteome</keyword>
<keyword id="KW-0808">Transferase</keyword>
<protein>
    <recommendedName>
        <fullName evidence="1">Nicotinate-nucleotide--dimethylbenzimidazole phosphoribosyltransferase</fullName>
        <shortName evidence="1">NN:DBI PRT</shortName>
        <ecNumber evidence="1">2.4.2.21</ecNumber>
    </recommendedName>
    <alternativeName>
        <fullName evidence="1">N(1)-alpha-phosphoribosyltransferase</fullName>
    </alternativeName>
</protein>
<gene>
    <name evidence="1" type="primary">cobT</name>
    <name type="synonym">cobT1</name>
    <name type="ordered locus">SAV_6030</name>
</gene>
<evidence type="ECO:0000255" key="1">
    <source>
        <dbReference type="HAMAP-Rule" id="MF_00230"/>
    </source>
</evidence>
<evidence type="ECO:0000256" key="2">
    <source>
        <dbReference type="SAM" id="MobiDB-lite"/>
    </source>
</evidence>
<reference key="1">
    <citation type="journal article" date="2001" name="Proc. Natl. Acad. Sci. U.S.A.">
        <title>Genome sequence of an industrial microorganism Streptomyces avermitilis: deducing the ability of producing secondary metabolites.</title>
        <authorList>
            <person name="Omura S."/>
            <person name="Ikeda H."/>
            <person name="Ishikawa J."/>
            <person name="Hanamoto A."/>
            <person name="Takahashi C."/>
            <person name="Shinose M."/>
            <person name="Takahashi Y."/>
            <person name="Horikawa H."/>
            <person name="Nakazawa H."/>
            <person name="Osonoe T."/>
            <person name="Kikuchi H."/>
            <person name="Shiba T."/>
            <person name="Sakaki Y."/>
            <person name="Hattori M."/>
        </authorList>
    </citation>
    <scope>NUCLEOTIDE SEQUENCE [LARGE SCALE GENOMIC DNA]</scope>
    <source>
        <strain>ATCC 31267 / DSM 46492 / JCM 5070 / NBRC 14893 / NCIMB 12804 / NRRL 8165 / MA-4680</strain>
    </source>
</reference>
<reference key="2">
    <citation type="journal article" date="2003" name="Nat. Biotechnol.">
        <title>Complete genome sequence and comparative analysis of the industrial microorganism Streptomyces avermitilis.</title>
        <authorList>
            <person name="Ikeda H."/>
            <person name="Ishikawa J."/>
            <person name="Hanamoto A."/>
            <person name="Shinose M."/>
            <person name="Kikuchi H."/>
            <person name="Shiba T."/>
            <person name="Sakaki Y."/>
            <person name="Hattori M."/>
            <person name="Omura S."/>
        </authorList>
    </citation>
    <scope>NUCLEOTIDE SEQUENCE [LARGE SCALE GENOMIC DNA]</scope>
    <source>
        <strain>ATCC 31267 / DSM 46492 / JCM 5070 / NBRC 14893 / NCIMB 12804 / NRRL 8165 / MA-4680</strain>
    </source>
</reference>
<proteinExistence type="inferred from homology"/>
<dbReference type="EC" id="2.4.2.21" evidence="1"/>
<dbReference type="EMBL" id="BA000030">
    <property type="protein sequence ID" value="BAC73741.1"/>
    <property type="molecule type" value="Genomic_DNA"/>
</dbReference>
<dbReference type="RefSeq" id="WP_010987431.1">
    <property type="nucleotide sequence ID" value="NZ_JZJK01000089.1"/>
</dbReference>
<dbReference type="SMR" id="Q82AM7"/>
<dbReference type="GeneID" id="41543107"/>
<dbReference type="KEGG" id="sma:SAVERM_6030"/>
<dbReference type="eggNOG" id="COG2038">
    <property type="taxonomic scope" value="Bacteria"/>
</dbReference>
<dbReference type="HOGENOM" id="CLU_002982_0_2_11"/>
<dbReference type="OrthoDB" id="9781491at2"/>
<dbReference type="UniPathway" id="UPA00061">
    <property type="reaction ID" value="UER00516"/>
</dbReference>
<dbReference type="Proteomes" id="UP000000428">
    <property type="component" value="Chromosome"/>
</dbReference>
<dbReference type="GO" id="GO:0008939">
    <property type="term" value="F:nicotinate-nucleotide-dimethylbenzimidazole phosphoribosyltransferase activity"/>
    <property type="evidence" value="ECO:0007669"/>
    <property type="project" value="UniProtKB-UniRule"/>
</dbReference>
<dbReference type="GO" id="GO:0009236">
    <property type="term" value="P:cobalamin biosynthetic process"/>
    <property type="evidence" value="ECO:0007669"/>
    <property type="project" value="UniProtKB-KW"/>
</dbReference>
<dbReference type="CDD" id="cd02439">
    <property type="entry name" value="DMB-PRT_CobT"/>
    <property type="match status" value="1"/>
</dbReference>
<dbReference type="Gene3D" id="1.10.1610.10">
    <property type="match status" value="1"/>
</dbReference>
<dbReference type="Gene3D" id="3.40.50.10210">
    <property type="match status" value="1"/>
</dbReference>
<dbReference type="HAMAP" id="MF_00230">
    <property type="entry name" value="CobT"/>
    <property type="match status" value="1"/>
</dbReference>
<dbReference type="InterPro" id="IPR003200">
    <property type="entry name" value="Nict_dMeBzImd_PRibTrfase"/>
</dbReference>
<dbReference type="InterPro" id="IPR017846">
    <property type="entry name" value="Nict_dMeBzImd_PRibTrfase_bact"/>
</dbReference>
<dbReference type="InterPro" id="IPR023195">
    <property type="entry name" value="Nict_dMeBzImd_PRibTrfase_N"/>
</dbReference>
<dbReference type="InterPro" id="IPR036087">
    <property type="entry name" value="Nict_dMeBzImd_PRibTrfase_sf"/>
</dbReference>
<dbReference type="NCBIfam" id="TIGR03160">
    <property type="entry name" value="cobT_DBIPRT"/>
    <property type="match status" value="1"/>
</dbReference>
<dbReference type="NCBIfam" id="NF000996">
    <property type="entry name" value="PRK00105.1"/>
    <property type="match status" value="1"/>
</dbReference>
<dbReference type="PANTHER" id="PTHR43463">
    <property type="entry name" value="NICOTINATE-NUCLEOTIDE--DIMETHYLBENZIMIDAZOLE PHOSPHORIBOSYLTRANSFERASE"/>
    <property type="match status" value="1"/>
</dbReference>
<dbReference type="PANTHER" id="PTHR43463:SF1">
    <property type="entry name" value="NICOTINATE-NUCLEOTIDE--DIMETHYLBENZIMIDAZOLE PHOSPHORIBOSYLTRANSFERASE"/>
    <property type="match status" value="1"/>
</dbReference>
<dbReference type="Pfam" id="PF02277">
    <property type="entry name" value="DBI_PRT"/>
    <property type="match status" value="1"/>
</dbReference>
<dbReference type="SUPFAM" id="SSF52733">
    <property type="entry name" value="Nicotinate mononucleotide:5,6-dimethylbenzimidazole phosphoribosyltransferase (CobT)"/>
    <property type="match status" value="1"/>
</dbReference>
<organism>
    <name type="scientific">Streptomyces avermitilis (strain ATCC 31267 / DSM 46492 / JCM 5070 / NBRC 14893 / NCIMB 12804 / NRRL 8165 / MA-4680)</name>
    <dbReference type="NCBI Taxonomy" id="227882"/>
    <lineage>
        <taxon>Bacteria</taxon>
        <taxon>Bacillati</taxon>
        <taxon>Actinomycetota</taxon>
        <taxon>Actinomycetes</taxon>
        <taxon>Kitasatosporales</taxon>
        <taxon>Streptomycetaceae</taxon>
        <taxon>Streptomyces</taxon>
    </lineage>
</organism>
<comment type="function">
    <text evidence="1">Catalyzes the synthesis of alpha-ribazole-5'-phosphate from nicotinate mononucleotide (NAMN) and 5,6-dimethylbenzimidazole (DMB).</text>
</comment>
<comment type="catalytic activity">
    <reaction evidence="1">
        <text>5,6-dimethylbenzimidazole + nicotinate beta-D-ribonucleotide = alpha-ribazole 5'-phosphate + nicotinate + H(+)</text>
        <dbReference type="Rhea" id="RHEA:11196"/>
        <dbReference type="ChEBI" id="CHEBI:15378"/>
        <dbReference type="ChEBI" id="CHEBI:15890"/>
        <dbReference type="ChEBI" id="CHEBI:32544"/>
        <dbReference type="ChEBI" id="CHEBI:57502"/>
        <dbReference type="ChEBI" id="CHEBI:57918"/>
        <dbReference type="EC" id="2.4.2.21"/>
    </reaction>
</comment>
<comment type="pathway">
    <text evidence="1">Nucleoside biosynthesis; alpha-ribazole biosynthesis; alpha-ribazole from 5,6-dimethylbenzimidazole: step 1/2.</text>
</comment>
<comment type="similarity">
    <text evidence="1">Belongs to the CobT family.</text>
</comment>
<name>COBT_STRAW</name>
<sequence length="375" mass="38743">MSSLNLDDFSDLIERPDGGVRRDAEARRERQIVPPGSLGRLDDLGEWLAAAQSAVPVRPVERPRVVLFAGDHGVASLGVSARPAGSADQLVRAVLEGASPASILARRLNVPVRVVDMALDCEPDALPESVVRHRVRRGSGRIDVEDALTLEEAEAAFRAGVAVADEEADAGTDLVVLGDVSVGGTTAAAVLIAALCGTDASVVTGRGGLAIDDLAWMRKCAAVRDALRRARPVLGDQLQLLAAVGGADLAAMTGFLLQSAARKTPVILDGVVSAACALVGQRIAFRAPDWWLAGQNSGEPAQAKALDRMALEPLLNHGVTVGEGAGALLALPLVQAAAALAAELPEKPEELEAGEGPEAAEESSPEPENPEALAE</sequence>
<feature type="chain" id="PRO_0000167072" description="Nicotinate-nucleotide--dimethylbenzimidazole phosphoribosyltransferase">
    <location>
        <begin position="1"/>
        <end position="375"/>
    </location>
</feature>
<feature type="region of interest" description="Disordered" evidence="2">
    <location>
        <begin position="344"/>
        <end position="375"/>
    </location>
</feature>
<feature type="compositionally biased region" description="Acidic residues" evidence="2">
    <location>
        <begin position="351"/>
        <end position="375"/>
    </location>
</feature>
<feature type="active site" description="Proton acceptor" evidence="1">
    <location>
        <position position="323"/>
    </location>
</feature>